<name>YCIB_PARC0</name>
<sequence length="189" mass="21257">MKLLIDFFPIILFFVAFKVWGIYTATAVAIAATVAQIAYLRIRHGRIEPMQWVSLGVIVVFGGATLLSHSETFIKWKPTVLYWLMGGALLVGQLFFRKNLIRTLMGGQMELPDAAWRAMNWSWTAFFAAMGAINLWVAHAFSTDTWVNFKLFGGIGLMAVFVIGQALYLSRYMKEPQDDARTAPEDAKP</sequence>
<organism>
    <name type="scientific">Paracidovorax citrulli (strain AAC00-1)</name>
    <name type="common">Acidovorax citrulli</name>
    <dbReference type="NCBI Taxonomy" id="397945"/>
    <lineage>
        <taxon>Bacteria</taxon>
        <taxon>Pseudomonadati</taxon>
        <taxon>Pseudomonadota</taxon>
        <taxon>Betaproteobacteria</taxon>
        <taxon>Burkholderiales</taxon>
        <taxon>Comamonadaceae</taxon>
        <taxon>Paracidovorax</taxon>
    </lineage>
</organism>
<feature type="chain" id="PRO_1000020977" description="Inner membrane-spanning protein YciB">
    <location>
        <begin position="1"/>
        <end position="189"/>
    </location>
</feature>
<feature type="transmembrane region" description="Helical" evidence="1">
    <location>
        <begin position="3"/>
        <end position="23"/>
    </location>
</feature>
<feature type="transmembrane region" description="Helical" evidence="1">
    <location>
        <begin position="47"/>
        <end position="67"/>
    </location>
</feature>
<feature type="transmembrane region" description="Helical" evidence="1">
    <location>
        <begin position="76"/>
        <end position="96"/>
    </location>
</feature>
<feature type="transmembrane region" description="Helical" evidence="1">
    <location>
        <begin position="121"/>
        <end position="141"/>
    </location>
</feature>
<feature type="transmembrane region" description="Helical" evidence="1">
    <location>
        <begin position="149"/>
        <end position="169"/>
    </location>
</feature>
<proteinExistence type="inferred from homology"/>
<keyword id="KW-0997">Cell inner membrane</keyword>
<keyword id="KW-1003">Cell membrane</keyword>
<keyword id="KW-0472">Membrane</keyword>
<keyword id="KW-0812">Transmembrane</keyword>
<keyword id="KW-1133">Transmembrane helix</keyword>
<protein>
    <recommendedName>
        <fullName evidence="1">Inner membrane-spanning protein YciB</fullName>
    </recommendedName>
</protein>
<reference key="1">
    <citation type="submission" date="2006-12" db="EMBL/GenBank/DDBJ databases">
        <title>Complete sequence of Acidovorax avenae subsp. citrulli AAC00-1.</title>
        <authorList>
            <person name="Copeland A."/>
            <person name="Lucas S."/>
            <person name="Lapidus A."/>
            <person name="Barry K."/>
            <person name="Detter J.C."/>
            <person name="Glavina del Rio T."/>
            <person name="Dalin E."/>
            <person name="Tice H."/>
            <person name="Pitluck S."/>
            <person name="Kiss H."/>
            <person name="Brettin T."/>
            <person name="Bruce D."/>
            <person name="Han C."/>
            <person name="Tapia R."/>
            <person name="Gilna P."/>
            <person name="Schmutz J."/>
            <person name="Larimer F."/>
            <person name="Land M."/>
            <person name="Hauser L."/>
            <person name="Kyrpides N."/>
            <person name="Kim E."/>
            <person name="Stahl D."/>
            <person name="Richardson P."/>
        </authorList>
    </citation>
    <scope>NUCLEOTIDE SEQUENCE [LARGE SCALE GENOMIC DNA]</scope>
    <source>
        <strain>AAC00-1</strain>
    </source>
</reference>
<comment type="function">
    <text evidence="1">Plays a role in cell envelope biogenesis, maintenance of cell envelope integrity and membrane homeostasis.</text>
</comment>
<comment type="subcellular location">
    <subcellularLocation>
        <location evidence="1">Cell inner membrane</location>
        <topology evidence="1">Multi-pass membrane protein</topology>
    </subcellularLocation>
</comment>
<comment type="similarity">
    <text evidence="1">Belongs to the YciB family.</text>
</comment>
<accession>A1TRC8</accession>
<dbReference type="EMBL" id="CP000512">
    <property type="protein sequence ID" value="ABM33516.1"/>
    <property type="molecule type" value="Genomic_DNA"/>
</dbReference>
<dbReference type="RefSeq" id="WP_011796027.1">
    <property type="nucleotide sequence ID" value="NC_008752.1"/>
</dbReference>
<dbReference type="STRING" id="397945.Aave_2949"/>
<dbReference type="GeneID" id="79792631"/>
<dbReference type="KEGG" id="aav:Aave_2949"/>
<dbReference type="eggNOG" id="COG2917">
    <property type="taxonomic scope" value="Bacteria"/>
</dbReference>
<dbReference type="HOGENOM" id="CLU_089554_2_0_4"/>
<dbReference type="OrthoDB" id="9788219at2"/>
<dbReference type="Proteomes" id="UP000002596">
    <property type="component" value="Chromosome"/>
</dbReference>
<dbReference type="GO" id="GO:0005886">
    <property type="term" value="C:plasma membrane"/>
    <property type="evidence" value="ECO:0007669"/>
    <property type="project" value="UniProtKB-SubCell"/>
</dbReference>
<dbReference type="HAMAP" id="MF_00189">
    <property type="entry name" value="YciB"/>
    <property type="match status" value="1"/>
</dbReference>
<dbReference type="InterPro" id="IPR006008">
    <property type="entry name" value="YciB"/>
</dbReference>
<dbReference type="NCBIfam" id="TIGR00997">
    <property type="entry name" value="ispZ"/>
    <property type="match status" value="1"/>
</dbReference>
<dbReference type="NCBIfam" id="NF001325">
    <property type="entry name" value="PRK00259.1-3"/>
    <property type="match status" value="1"/>
</dbReference>
<dbReference type="PANTHER" id="PTHR36917:SF1">
    <property type="entry name" value="INNER MEMBRANE-SPANNING PROTEIN YCIB"/>
    <property type="match status" value="1"/>
</dbReference>
<dbReference type="PANTHER" id="PTHR36917">
    <property type="entry name" value="INTRACELLULAR SEPTATION PROTEIN A-RELATED"/>
    <property type="match status" value="1"/>
</dbReference>
<dbReference type="Pfam" id="PF04279">
    <property type="entry name" value="IspA"/>
    <property type="match status" value="1"/>
</dbReference>
<evidence type="ECO:0000255" key="1">
    <source>
        <dbReference type="HAMAP-Rule" id="MF_00189"/>
    </source>
</evidence>
<gene>
    <name evidence="1" type="primary">yciB</name>
    <name type="ordered locus">Aave_2949</name>
</gene>